<feature type="chain" id="PRO_0000364253" description="Eukaryotic translation initiation factor 3 subunit L">
    <location>
        <begin position="1"/>
        <end position="539"/>
    </location>
</feature>
<feature type="domain" description="PCI" evidence="2">
    <location>
        <begin position="306"/>
        <end position="514"/>
    </location>
</feature>
<name>EIF3L_DROYA</name>
<sequence>MYGGDEYANNSEYYDDYAHTGDPQLDMEYERNYYAARMPDNVKYFLINFCQAIKEGNLYDIQNMYENTFPQISDHHFDKTAWPEEQEVAAIVDNDKVFLILYKELYYRHIHARISGGPKLEQRINSFFNYCDFFNLIISAQNPVMLELPDIWLWELVDEFVYQFQNFAQYRARLTDKSQDEIQQLCVNHSNEWSILCILNVLHSLVDISNIKKQLEAISQGSDPQTVAGDFGKLSFYKMLGYFSLVGLLRVHSLLGDYYQAIKVLEPIEIHKKSAYSHIPACQISTSYYVGFAYMMMRRYADAIRTFSDILLYIQRTKQLYSTRSYQNDQINKQAEQMYHLLAICLVLHPQCIDESIQQVLREKNYHDAMFKMQCGDLEVFKSFFVFACPRFVSPCPPAADAPMEDYVKDPMEHQLLVFMDEVRQQKDLPTTRSYLKLYTTLPLTKLASFIDPNASEDDVSKLLIRLLCFKHKMRNLVWSKGPSGLEGTFKSGSELDFYIDDDMIHIADTKVSHRYGDFFVRKILKFNDLNRKLKNINI</sequence>
<accession>B4PG99</accession>
<organism>
    <name type="scientific">Drosophila yakuba</name>
    <name type="common">Fruit fly</name>
    <dbReference type="NCBI Taxonomy" id="7245"/>
    <lineage>
        <taxon>Eukaryota</taxon>
        <taxon>Metazoa</taxon>
        <taxon>Ecdysozoa</taxon>
        <taxon>Arthropoda</taxon>
        <taxon>Hexapoda</taxon>
        <taxon>Insecta</taxon>
        <taxon>Pterygota</taxon>
        <taxon>Neoptera</taxon>
        <taxon>Endopterygota</taxon>
        <taxon>Diptera</taxon>
        <taxon>Brachycera</taxon>
        <taxon>Muscomorpha</taxon>
        <taxon>Ephydroidea</taxon>
        <taxon>Drosophilidae</taxon>
        <taxon>Drosophila</taxon>
        <taxon>Sophophora</taxon>
    </lineage>
</organism>
<keyword id="KW-0963">Cytoplasm</keyword>
<keyword id="KW-0396">Initiation factor</keyword>
<keyword id="KW-0648">Protein biosynthesis</keyword>
<proteinExistence type="inferred from homology"/>
<evidence type="ECO:0000255" key="1">
    <source>
        <dbReference type="HAMAP-Rule" id="MF_03011"/>
    </source>
</evidence>
<evidence type="ECO:0000255" key="2">
    <source>
        <dbReference type="PROSITE-ProRule" id="PRU01185"/>
    </source>
</evidence>
<reference key="1">
    <citation type="journal article" date="2007" name="Nature">
        <title>Evolution of genes and genomes on the Drosophila phylogeny.</title>
        <authorList>
            <consortium name="Drosophila 12 genomes consortium"/>
        </authorList>
    </citation>
    <scope>NUCLEOTIDE SEQUENCE [LARGE SCALE GENOMIC DNA]</scope>
    <source>
        <strain>Tai18E2 / Tucson 14021-0261.01</strain>
    </source>
</reference>
<comment type="function">
    <text evidence="1">Component of the eukaryotic translation initiation factor 3 (eIF-3) complex, which is involved in protein synthesis of a specialized repertoire of mRNAs and, together with other initiation factors, stimulates binding of mRNA and methionyl-tRNAi to the 40S ribosome. The eIF-3 complex specifically targets and initiates translation of a subset of mRNAs involved in cell proliferation.</text>
</comment>
<comment type="subunit">
    <text evidence="1">Component of the eukaryotic translation initiation factor 3 (eIF-3) complex. The eIF-3 complex interacts with pix.</text>
</comment>
<comment type="subcellular location">
    <subcellularLocation>
        <location evidence="1">Cytoplasm</location>
    </subcellularLocation>
</comment>
<comment type="similarity">
    <text evidence="1">Belongs to the eIF-3 subunit L family.</text>
</comment>
<gene>
    <name type="ORF">GE20146</name>
</gene>
<protein>
    <recommendedName>
        <fullName evidence="1">Eukaryotic translation initiation factor 3 subunit L</fullName>
        <shortName evidence="1">eIF3l</shortName>
    </recommendedName>
</protein>
<dbReference type="EMBL" id="CM000159">
    <property type="protein sequence ID" value="EDW94263.1"/>
    <property type="molecule type" value="Genomic_DNA"/>
</dbReference>
<dbReference type="SMR" id="B4PG99"/>
<dbReference type="EnsemblMetazoa" id="FBtr0266664">
    <property type="protein sequence ID" value="FBpp0265156"/>
    <property type="gene ID" value="FBgn0237469"/>
</dbReference>
<dbReference type="EnsemblMetazoa" id="XM_002094515.3">
    <property type="protein sequence ID" value="XP_002094551.1"/>
    <property type="gene ID" value="LOC6533851"/>
</dbReference>
<dbReference type="GeneID" id="6533851"/>
<dbReference type="KEGG" id="dya:Dyak_GE20146"/>
<dbReference type="CTD" id="51386"/>
<dbReference type="eggNOG" id="KOG3677">
    <property type="taxonomic scope" value="Eukaryota"/>
</dbReference>
<dbReference type="HOGENOM" id="CLU_029210_0_1_1"/>
<dbReference type="OMA" id="AGWFIRN"/>
<dbReference type="OrthoDB" id="15082at2759"/>
<dbReference type="PhylomeDB" id="B4PG99"/>
<dbReference type="Proteomes" id="UP000002282">
    <property type="component" value="Chromosome 3L"/>
</dbReference>
<dbReference type="GO" id="GO:0016282">
    <property type="term" value="C:eukaryotic 43S preinitiation complex"/>
    <property type="evidence" value="ECO:0007669"/>
    <property type="project" value="UniProtKB-UniRule"/>
</dbReference>
<dbReference type="GO" id="GO:0033290">
    <property type="term" value="C:eukaryotic 48S preinitiation complex"/>
    <property type="evidence" value="ECO:0007669"/>
    <property type="project" value="UniProtKB-UniRule"/>
</dbReference>
<dbReference type="GO" id="GO:0005852">
    <property type="term" value="C:eukaryotic translation initiation factor 3 complex"/>
    <property type="evidence" value="ECO:0007669"/>
    <property type="project" value="UniProtKB-UniRule"/>
</dbReference>
<dbReference type="GO" id="GO:0003743">
    <property type="term" value="F:translation initiation factor activity"/>
    <property type="evidence" value="ECO:0007669"/>
    <property type="project" value="UniProtKB-UniRule"/>
</dbReference>
<dbReference type="GO" id="GO:0001732">
    <property type="term" value="P:formation of cytoplasmic translation initiation complex"/>
    <property type="evidence" value="ECO:0007669"/>
    <property type="project" value="UniProtKB-UniRule"/>
</dbReference>
<dbReference type="HAMAP" id="MF_03011">
    <property type="entry name" value="eIF3l"/>
    <property type="match status" value="1"/>
</dbReference>
<dbReference type="InterPro" id="IPR019382">
    <property type="entry name" value="eIF3l"/>
</dbReference>
<dbReference type="InterPro" id="IPR000717">
    <property type="entry name" value="PCI_dom"/>
</dbReference>
<dbReference type="InterPro" id="IPR011990">
    <property type="entry name" value="TPR-like_helical_dom_sf"/>
</dbReference>
<dbReference type="PANTHER" id="PTHR13242">
    <property type="entry name" value="EUKARYOTIC TRANSLATION INITIATION FACTOR 3"/>
    <property type="match status" value="1"/>
</dbReference>
<dbReference type="PANTHER" id="PTHR13242:SF0">
    <property type="entry name" value="EUKARYOTIC TRANSLATION INITIATION FACTOR 3 SUBUNIT L"/>
    <property type="match status" value="1"/>
</dbReference>
<dbReference type="Pfam" id="PF10255">
    <property type="entry name" value="Paf67"/>
    <property type="match status" value="1"/>
</dbReference>
<dbReference type="SUPFAM" id="SSF48452">
    <property type="entry name" value="TPR-like"/>
    <property type="match status" value="1"/>
</dbReference>
<dbReference type="PROSITE" id="PS50250">
    <property type="entry name" value="PCI"/>
    <property type="match status" value="1"/>
</dbReference>